<protein>
    <recommendedName>
        <fullName>Annexin A1</fullName>
    </recommendedName>
    <alternativeName>
        <fullName>Annexin I</fullName>
    </alternativeName>
    <alternativeName>
        <fullName>Annexin-1</fullName>
    </alternativeName>
    <alternativeName>
        <fullName>Calpactin II</fullName>
    </alternativeName>
    <alternativeName>
        <fullName>Calpactin-2</fullName>
    </alternativeName>
    <alternativeName>
        <fullName>Lipocortin I</fullName>
    </alternativeName>
    <component>
        <recommendedName>
            <fullName evidence="2">Annexin Ac2-26</fullName>
        </recommendedName>
    </component>
</protein>
<dbReference type="EMBL" id="AF544227">
    <property type="protein sequence ID" value="AAN34819.1"/>
    <property type="molecule type" value="mRNA"/>
</dbReference>
<dbReference type="RefSeq" id="NP_001075336.1">
    <property type="nucleotide sequence ID" value="NM_001081867.2"/>
</dbReference>
<dbReference type="SMR" id="Q8HZM6"/>
<dbReference type="FunCoup" id="Q8HZM6">
    <property type="interactions" value="599"/>
</dbReference>
<dbReference type="STRING" id="9796.ENSECAP00000013992"/>
<dbReference type="PaxDb" id="9796-ENSECAP00000013992"/>
<dbReference type="PeptideAtlas" id="Q8HZM6"/>
<dbReference type="Ensembl" id="ENSECAT00000017244.4">
    <property type="protein sequence ID" value="ENSECAP00000013992.1"/>
    <property type="gene ID" value="ENSECAG00000015794.4"/>
</dbReference>
<dbReference type="GeneID" id="100033940"/>
<dbReference type="KEGG" id="ecb:100033940"/>
<dbReference type="CTD" id="301"/>
<dbReference type="VGNC" id="VGNC:57172">
    <property type="gene designation" value="ANXA1"/>
</dbReference>
<dbReference type="GeneTree" id="ENSGT00940000155221"/>
<dbReference type="HOGENOM" id="CLU_025300_0_0_1"/>
<dbReference type="InParanoid" id="Q8HZM6"/>
<dbReference type="OMA" id="FMENQEQ"/>
<dbReference type="OrthoDB" id="37886at2759"/>
<dbReference type="TreeFam" id="TF105452"/>
<dbReference type="Proteomes" id="UP000002281">
    <property type="component" value="Chromosome 23"/>
</dbReference>
<dbReference type="Bgee" id="ENSECAG00000015794">
    <property type="expression patterns" value="Expressed in epithelium of bronchus and 23 other cell types or tissues"/>
</dbReference>
<dbReference type="GO" id="GO:0016324">
    <property type="term" value="C:apical plasma membrane"/>
    <property type="evidence" value="ECO:0000250"/>
    <property type="project" value="UniProtKB"/>
</dbReference>
<dbReference type="GO" id="GO:0016323">
    <property type="term" value="C:basolateral plasma membrane"/>
    <property type="evidence" value="ECO:0007669"/>
    <property type="project" value="UniProtKB-SubCell"/>
</dbReference>
<dbReference type="GO" id="GO:0005737">
    <property type="term" value="C:cytoplasm"/>
    <property type="evidence" value="ECO:0000250"/>
    <property type="project" value="UniProtKB"/>
</dbReference>
<dbReference type="GO" id="GO:0031901">
    <property type="term" value="C:early endosome membrane"/>
    <property type="evidence" value="ECO:0000250"/>
    <property type="project" value="UniProtKB"/>
</dbReference>
<dbReference type="GO" id="GO:0070062">
    <property type="term" value="C:extracellular exosome"/>
    <property type="evidence" value="ECO:0000250"/>
    <property type="project" value="UniProtKB"/>
</dbReference>
<dbReference type="GO" id="GO:0005615">
    <property type="term" value="C:extracellular space"/>
    <property type="evidence" value="ECO:0000250"/>
    <property type="project" value="UniProtKB"/>
</dbReference>
<dbReference type="GO" id="GO:0016328">
    <property type="term" value="C:lateral plasma membrane"/>
    <property type="evidence" value="ECO:0000250"/>
    <property type="project" value="UniProtKB"/>
</dbReference>
<dbReference type="GO" id="GO:0031514">
    <property type="term" value="C:motile cilium"/>
    <property type="evidence" value="ECO:0000250"/>
    <property type="project" value="UniProtKB"/>
</dbReference>
<dbReference type="GO" id="GO:0005634">
    <property type="term" value="C:nucleus"/>
    <property type="evidence" value="ECO:0000250"/>
    <property type="project" value="UniProtKB"/>
</dbReference>
<dbReference type="GO" id="GO:0001891">
    <property type="term" value="C:phagocytic cup"/>
    <property type="evidence" value="ECO:0007669"/>
    <property type="project" value="UniProtKB-SubCell"/>
</dbReference>
<dbReference type="GO" id="GO:0005886">
    <property type="term" value="C:plasma membrane"/>
    <property type="evidence" value="ECO:0000250"/>
    <property type="project" value="UniProtKB"/>
</dbReference>
<dbReference type="GO" id="GO:0012506">
    <property type="term" value="C:vesicle membrane"/>
    <property type="evidence" value="ECO:0000318"/>
    <property type="project" value="GO_Central"/>
</dbReference>
<dbReference type="GO" id="GO:0005509">
    <property type="term" value="F:calcium ion binding"/>
    <property type="evidence" value="ECO:0000250"/>
    <property type="project" value="UniProtKB"/>
</dbReference>
<dbReference type="GO" id="GO:0005544">
    <property type="term" value="F:calcium-dependent phospholipid binding"/>
    <property type="evidence" value="ECO:0000250"/>
    <property type="project" value="UniProtKB"/>
</dbReference>
<dbReference type="GO" id="GO:0001786">
    <property type="term" value="F:phosphatidylserine binding"/>
    <property type="evidence" value="ECO:0000318"/>
    <property type="project" value="GO_Central"/>
</dbReference>
<dbReference type="GO" id="GO:0019834">
    <property type="term" value="F:phospholipase A2 inhibitor activity"/>
    <property type="evidence" value="ECO:0007669"/>
    <property type="project" value="UniProtKB-KW"/>
</dbReference>
<dbReference type="GO" id="GO:0030036">
    <property type="term" value="P:actin cytoskeleton organization"/>
    <property type="evidence" value="ECO:0000250"/>
    <property type="project" value="UniProtKB"/>
</dbReference>
<dbReference type="GO" id="GO:0002250">
    <property type="term" value="P:adaptive immune response"/>
    <property type="evidence" value="ECO:0007669"/>
    <property type="project" value="UniProtKB-KW"/>
</dbReference>
<dbReference type="GO" id="GO:0071385">
    <property type="term" value="P:cellular response to glucocorticoid stimulus"/>
    <property type="evidence" value="ECO:0000250"/>
    <property type="project" value="UniProtKB"/>
</dbReference>
<dbReference type="GO" id="GO:0007187">
    <property type="term" value="P:G protein-coupled receptor signaling pathway, coupled to cyclic nucleotide second messenger"/>
    <property type="evidence" value="ECO:0000250"/>
    <property type="project" value="UniProtKB"/>
</dbReference>
<dbReference type="GO" id="GO:0071621">
    <property type="term" value="P:granulocyte chemotaxis"/>
    <property type="evidence" value="ECO:0000250"/>
    <property type="project" value="UniProtKB"/>
</dbReference>
<dbReference type="GO" id="GO:0006954">
    <property type="term" value="P:inflammatory response"/>
    <property type="evidence" value="ECO:0000250"/>
    <property type="project" value="UniProtKB"/>
</dbReference>
<dbReference type="GO" id="GO:0045087">
    <property type="term" value="P:innate immune response"/>
    <property type="evidence" value="ECO:0007669"/>
    <property type="project" value="UniProtKB-KW"/>
</dbReference>
<dbReference type="GO" id="GO:0002548">
    <property type="term" value="P:monocyte chemotaxis"/>
    <property type="evidence" value="ECO:0000250"/>
    <property type="project" value="UniProtKB"/>
</dbReference>
<dbReference type="GO" id="GO:0045920">
    <property type="term" value="P:negative regulation of exocytosis"/>
    <property type="evidence" value="ECO:0000250"/>
    <property type="project" value="UniProtKB"/>
</dbReference>
<dbReference type="GO" id="GO:0045629">
    <property type="term" value="P:negative regulation of T-helper 2 cell differentiation"/>
    <property type="evidence" value="ECO:0000250"/>
    <property type="project" value="UniProtKB"/>
</dbReference>
<dbReference type="GO" id="GO:0042119">
    <property type="term" value="P:neutrophil activation"/>
    <property type="evidence" value="ECO:0000250"/>
    <property type="project" value="UniProtKB"/>
</dbReference>
<dbReference type="GO" id="GO:0006909">
    <property type="term" value="P:phagocytosis"/>
    <property type="evidence" value="ECO:0000250"/>
    <property type="project" value="UniProtKB"/>
</dbReference>
<dbReference type="GO" id="GO:0032743">
    <property type="term" value="P:positive regulation of interleukin-2 production"/>
    <property type="evidence" value="ECO:0000250"/>
    <property type="project" value="UniProtKB"/>
</dbReference>
<dbReference type="GO" id="GO:0042102">
    <property type="term" value="P:positive regulation of T cell proliferation"/>
    <property type="evidence" value="ECO:0000250"/>
    <property type="project" value="UniProtKB"/>
</dbReference>
<dbReference type="GO" id="GO:0045627">
    <property type="term" value="P:positive regulation of T-helper 1 cell differentiation"/>
    <property type="evidence" value="ECO:0000250"/>
    <property type="project" value="UniProtKB"/>
</dbReference>
<dbReference type="GO" id="GO:0090303">
    <property type="term" value="P:positive regulation of wound healing"/>
    <property type="evidence" value="ECO:0000250"/>
    <property type="project" value="UniProtKB"/>
</dbReference>
<dbReference type="GO" id="GO:0008360">
    <property type="term" value="P:regulation of cell shape"/>
    <property type="evidence" value="ECO:0000250"/>
    <property type="project" value="UniProtKB"/>
</dbReference>
<dbReference type="GO" id="GO:0046883">
    <property type="term" value="P:regulation of hormone secretion"/>
    <property type="evidence" value="ECO:0000250"/>
    <property type="project" value="UniProtKB"/>
</dbReference>
<dbReference type="GO" id="GO:0050727">
    <property type="term" value="P:regulation of inflammatory response"/>
    <property type="evidence" value="ECO:0000250"/>
    <property type="project" value="UniProtKB"/>
</dbReference>
<dbReference type="GO" id="GO:0032652">
    <property type="term" value="P:regulation of interleukin-1 production"/>
    <property type="evidence" value="ECO:0000250"/>
    <property type="project" value="UniProtKB"/>
</dbReference>
<dbReference type="GO" id="GO:0002685">
    <property type="term" value="P:regulation of leukocyte migration"/>
    <property type="evidence" value="ECO:0000250"/>
    <property type="project" value="UniProtKB"/>
</dbReference>
<dbReference type="GO" id="GO:0007165">
    <property type="term" value="P:signal transduction"/>
    <property type="evidence" value="ECO:0000318"/>
    <property type="project" value="GO_Central"/>
</dbReference>
<dbReference type="FunFam" id="1.10.220.10:FF:000001">
    <property type="entry name" value="Annexin"/>
    <property type="match status" value="1"/>
</dbReference>
<dbReference type="FunFam" id="1.10.220.10:FF:000002">
    <property type="entry name" value="Annexin"/>
    <property type="match status" value="1"/>
</dbReference>
<dbReference type="FunFam" id="1.10.220.10:FF:000003">
    <property type="entry name" value="Annexin"/>
    <property type="match status" value="1"/>
</dbReference>
<dbReference type="FunFam" id="1.10.220.10:FF:000007">
    <property type="entry name" value="Annexin"/>
    <property type="match status" value="1"/>
</dbReference>
<dbReference type="Gene3D" id="1.10.220.10">
    <property type="entry name" value="Annexin"/>
    <property type="match status" value="4"/>
</dbReference>
<dbReference type="InterPro" id="IPR001464">
    <property type="entry name" value="Annexin"/>
</dbReference>
<dbReference type="InterPro" id="IPR018502">
    <property type="entry name" value="Annexin_repeat"/>
</dbReference>
<dbReference type="InterPro" id="IPR018252">
    <property type="entry name" value="Annexin_repeat_CS"/>
</dbReference>
<dbReference type="InterPro" id="IPR037104">
    <property type="entry name" value="Annexin_sf"/>
</dbReference>
<dbReference type="InterPro" id="IPR002388">
    <property type="entry name" value="ANX1"/>
</dbReference>
<dbReference type="PANTHER" id="PTHR10502">
    <property type="entry name" value="ANNEXIN"/>
    <property type="match status" value="1"/>
</dbReference>
<dbReference type="PANTHER" id="PTHR10502:SF17">
    <property type="entry name" value="ANNEXIN A1"/>
    <property type="match status" value="1"/>
</dbReference>
<dbReference type="Pfam" id="PF00191">
    <property type="entry name" value="Annexin"/>
    <property type="match status" value="4"/>
</dbReference>
<dbReference type="PRINTS" id="PR00196">
    <property type="entry name" value="ANNEXIN"/>
</dbReference>
<dbReference type="PRINTS" id="PR00197">
    <property type="entry name" value="ANNEXINI"/>
</dbReference>
<dbReference type="SMART" id="SM00335">
    <property type="entry name" value="ANX"/>
    <property type="match status" value="4"/>
</dbReference>
<dbReference type="SUPFAM" id="SSF47874">
    <property type="entry name" value="Annexin"/>
    <property type="match status" value="1"/>
</dbReference>
<dbReference type="PROSITE" id="PS00223">
    <property type="entry name" value="ANNEXIN_1"/>
    <property type="match status" value="4"/>
</dbReference>
<dbReference type="PROSITE" id="PS51897">
    <property type="entry name" value="ANNEXIN_2"/>
    <property type="match status" value="4"/>
</dbReference>
<gene>
    <name type="primary">ANXA1</name>
    <name type="synonym">ANX1</name>
</gene>
<proteinExistence type="evidence at transcript level"/>
<organism>
    <name type="scientific">Equus caballus</name>
    <name type="common">Horse</name>
    <dbReference type="NCBI Taxonomy" id="9796"/>
    <lineage>
        <taxon>Eukaryota</taxon>
        <taxon>Metazoa</taxon>
        <taxon>Chordata</taxon>
        <taxon>Craniata</taxon>
        <taxon>Vertebrata</taxon>
        <taxon>Euteleostomi</taxon>
        <taxon>Mammalia</taxon>
        <taxon>Eutheria</taxon>
        <taxon>Laurasiatheria</taxon>
        <taxon>Perissodactyla</taxon>
        <taxon>Equidae</taxon>
        <taxon>Equus</taxon>
    </lineage>
</organism>
<accession>Q8HZM6</accession>
<feature type="chain" id="PRO_0000067459" description="Annexin A1">
    <location>
        <begin position="1"/>
        <end position="346"/>
    </location>
</feature>
<feature type="peptide" id="PRO_0000454555" description="Annexin Ac2-26" evidence="2">
    <location>
        <begin position="2"/>
        <end position="26"/>
    </location>
</feature>
<feature type="repeat" description="Annexin 1" evidence="7">
    <location>
        <begin position="42"/>
        <end position="113"/>
    </location>
</feature>
<feature type="repeat" description="Annexin 2" evidence="7">
    <location>
        <begin position="114"/>
        <end position="185"/>
    </location>
</feature>
<feature type="repeat" description="Annexin 3" evidence="7">
    <location>
        <begin position="197"/>
        <end position="269"/>
    </location>
</feature>
<feature type="repeat" description="Annexin 4" evidence="7">
    <location>
        <begin position="273"/>
        <end position="344"/>
    </location>
</feature>
<feature type="binding site" evidence="5">
    <location>
        <position position="59"/>
    </location>
    <ligand>
        <name>Ca(2+)</name>
        <dbReference type="ChEBI" id="CHEBI:29108"/>
        <label>1</label>
    </ligand>
</feature>
<feature type="binding site" evidence="5">
    <location>
        <position position="60"/>
    </location>
    <ligand>
        <name>Ca(2+)</name>
        <dbReference type="ChEBI" id="CHEBI:29108"/>
        <label>1</label>
    </ligand>
</feature>
<feature type="binding site" evidence="5">
    <location>
        <position position="62"/>
    </location>
    <ligand>
        <name>Ca(2+)</name>
        <dbReference type="ChEBI" id="CHEBI:29108"/>
        <label>1</label>
    </ligand>
</feature>
<feature type="binding site" evidence="5">
    <location>
        <position position="97"/>
    </location>
    <ligand>
        <name>Ca(2+)</name>
        <dbReference type="ChEBI" id="CHEBI:29108"/>
        <label>2</label>
    </ligand>
</feature>
<feature type="binding site" evidence="5">
    <location>
        <position position="100"/>
    </location>
    <ligand>
        <name>Ca(2+)</name>
        <dbReference type="ChEBI" id="CHEBI:29108"/>
        <label>2</label>
    </ligand>
</feature>
<feature type="binding site" evidence="5">
    <location>
        <position position="105"/>
    </location>
    <ligand>
        <name>Ca(2+)</name>
        <dbReference type="ChEBI" id="CHEBI:29108"/>
        <label>2</label>
    </ligand>
</feature>
<feature type="binding site" evidence="5">
    <location>
        <position position="127"/>
    </location>
    <ligand>
        <name>Ca(2+)</name>
        <dbReference type="ChEBI" id="CHEBI:29108"/>
        <label>3</label>
    </ligand>
</feature>
<feature type="binding site" evidence="5">
    <location>
        <position position="129"/>
    </location>
    <ligand>
        <name>Ca(2+)</name>
        <dbReference type="ChEBI" id="CHEBI:29108"/>
        <label>3</label>
    </ligand>
</feature>
<feature type="binding site" evidence="5">
    <location>
        <position position="131"/>
    </location>
    <ligand>
        <name>Ca(2+)</name>
        <dbReference type="ChEBI" id="CHEBI:29108"/>
        <label>3</label>
    </ligand>
</feature>
<feature type="binding site" evidence="5">
    <location>
        <position position="132"/>
    </location>
    <ligand>
        <name>Ca(2+)</name>
        <dbReference type="ChEBI" id="CHEBI:29108"/>
        <label>4</label>
    </ligand>
</feature>
<feature type="binding site" evidence="5">
    <location>
        <position position="134"/>
    </location>
    <ligand>
        <name>Ca(2+)</name>
        <dbReference type="ChEBI" id="CHEBI:29108"/>
        <label>4</label>
    </ligand>
</feature>
<feature type="binding site" evidence="5">
    <location>
        <position position="171"/>
    </location>
    <ligand>
        <name>Ca(2+)</name>
        <dbReference type="ChEBI" id="CHEBI:29108"/>
        <label>3</label>
    </ligand>
</feature>
<feature type="binding site" evidence="5">
    <location>
        <position position="210"/>
    </location>
    <ligand>
        <name>Ca(2+)</name>
        <dbReference type="ChEBI" id="CHEBI:29108"/>
        <label>5</label>
    </ligand>
</feature>
<feature type="binding site" evidence="5">
    <location>
        <position position="213"/>
    </location>
    <ligand>
        <name>Ca(2+)</name>
        <dbReference type="ChEBI" id="CHEBI:29108"/>
        <label>5</label>
    </ligand>
</feature>
<feature type="binding site" evidence="5">
    <location>
        <position position="215"/>
    </location>
    <ligand>
        <name>Ca(2+)</name>
        <dbReference type="ChEBI" id="CHEBI:29108"/>
        <label>5</label>
    </ligand>
</feature>
<feature type="binding site" evidence="5">
    <location>
        <position position="253"/>
    </location>
    <ligand>
        <name>Ca(2+)</name>
        <dbReference type="ChEBI" id="CHEBI:29108"/>
        <label>6</label>
    </ligand>
</feature>
<feature type="binding site" evidence="5">
    <location>
        <position position="255"/>
    </location>
    <ligand>
        <name>Ca(2+)</name>
        <dbReference type="ChEBI" id="CHEBI:29108"/>
        <label>5</label>
    </ligand>
</feature>
<feature type="binding site" evidence="5">
    <location>
        <position position="256"/>
    </location>
    <ligand>
        <name>Ca(2+)</name>
        <dbReference type="ChEBI" id="CHEBI:29108"/>
        <label>6</label>
    </ligand>
</feature>
<feature type="binding site" evidence="5">
    <location>
        <position position="261"/>
    </location>
    <ligand>
        <name>Ca(2+)</name>
        <dbReference type="ChEBI" id="CHEBI:29108"/>
        <label>6</label>
    </ligand>
</feature>
<feature type="binding site" evidence="5">
    <location>
        <position position="286"/>
    </location>
    <ligand>
        <name>Ca(2+)</name>
        <dbReference type="ChEBI" id="CHEBI:29108"/>
        <label>7</label>
    </ligand>
</feature>
<feature type="binding site" evidence="5">
    <location>
        <position position="288"/>
    </location>
    <ligand>
        <name>Ca(2+)</name>
        <dbReference type="ChEBI" id="CHEBI:29108"/>
        <label>7</label>
    </ligand>
</feature>
<feature type="binding site" evidence="5">
    <location>
        <position position="290"/>
    </location>
    <ligand>
        <name>Ca(2+)</name>
        <dbReference type="ChEBI" id="CHEBI:29108"/>
        <label>7</label>
    </ligand>
</feature>
<feature type="binding site" evidence="5">
    <location>
        <position position="328"/>
    </location>
    <ligand>
        <name>Ca(2+)</name>
        <dbReference type="ChEBI" id="CHEBI:29108"/>
        <label>8</label>
    </ligand>
</feature>
<feature type="binding site" evidence="5">
    <location>
        <position position="330"/>
    </location>
    <ligand>
        <name>Ca(2+)</name>
        <dbReference type="ChEBI" id="CHEBI:29108"/>
        <label>7</label>
    </ligand>
</feature>
<feature type="binding site" evidence="5">
    <location>
        <position position="331"/>
    </location>
    <ligand>
        <name>Ca(2+)</name>
        <dbReference type="ChEBI" id="CHEBI:29108"/>
        <label>8</label>
    </ligand>
</feature>
<feature type="binding site" evidence="5">
    <location>
        <position position="336"/>
    </location>
    <ligand>
        <name>Ca(2+)</name>
        <dbReference type="ChEBI" id="CHEBI:29108"/>
        <label>8</label>
    </ligand>
</feature>
<feature type="site" description="Cleavage; by CTSG" evidence="2">
    <location>
        <begin position="26"/>
        <end position="27"/>
    </location>
</feature>
<feature type="modified residue" description="Phosphoserine; by TRPM7" evidence="2">
    <location>
        <position position="5"/>
    </location>
</feature>
<feature type="modified residue" description="Phosphotyrosine; by EGFR" evidence="2">
    <location>
        <position position="21"/>
    </location>
</feature>
<feature type="modified residue" description="Phosphoserine" evidence="2">
    <location>
        <position position="34"/>
    </location>
</feature>
<feature type="modified residue" description="Phosphoserine" evidence="2">
    <location>
        <position position="37"/>
    </location>
</feature>
<feature type="modified residue" description="N6-acetyllysine" evidence="4">
    <location>
        <position position="58"/>
    </location>
</feature>
<feature type="modified residue" description="Phosphothreonine" evidence="2">
    <location>
        <position position="136"/>
    </location>
</feature>
<feature type="modified residue" description="N6-acetyllysine" evidence="2">
    <location>
        <position position="312"/>
    </location>
</feature>
<feature type="disulfide bond" evidence="5">
    <location>
        <begin position="324"/>
        <end position="343"/>
    </location>
</feature>
<feature type="cross-link" description="Isoglutamyl lysine isopeptide (Gln-Lys) (interchain with K-?)" evidence="1">
    <location>
        <position position="19"/>
    </location>
</feature>
<feature type="cross-link" description="Glycyl lysine isopeptide (Lys-Gly) (interchain with G-Cter in SUMO1); alternate" evidence="2">
    <location>
        <position position="214"/>
    </location>
</feature>
<feature type="cross-link" description="Glycyl lysine isopeptide (Lys-Gly) (interchain with G-Cter in SUMO2); alternate" evidence="2">
    <location>
        <position position="214"/>
    </location>
</feature>
<feature type="cross-link" description="Glycyl lysine isopeptide (Lys-Gly) (interchain with G-Cter in SUMO1)" evidence="4">
    <location>
        <position position="257"/>
    </location>
</feature>
<feature type="cross-link" description="Glycyl lysine isopeptide (Lys-Gly) (interchain with G-Cter in SUMO1)" evidence="2">
    <location>
        <position position="332"/>
    </location>
</feature>
<evidence type="ECO:0000250" key="1"/>
<evidence type="ECO:0000250" key="2">
    <source>
        <dbReference type="UniProtKB" id="P04083"/>
    </source>
</evidence>
<evidence type="ECO:0000250" key="3">
    <source>
        <dbReference type="UniProtKB" id="P07150"/>
    </source>
</evidence>
<evidence type="ECO:0000250" key="4">
    <source>
        <dbReference type="UniProtKB" id="P10107"/>
    </source>
</evidence>
<evidence type="ECO:0000250" key="5">
    <source>
        <dbReference type="UniProtKB" id="P19619"/>
    </source>
</evidence>
<evidence type="ECO:0000250" key="6">
    <source>
        <dbReference type="UniProtKB" id="P51662"/>
    </source>
</evidence>
<evidence type="ECO:0000255" key="7">
    <source>
        <dbReference type="PROSITE-ProRule" id="PRU01245"/>
    </source>
</evidence>
<evidence type="ECO:0000305" key="8"/>
<comment type="function">
    <text evidence="2 4 5">Plays important roles in the innate immune response as effector of glucocorticoid-mediated responses and regulator of the inflammatory process. Has anti-inflammatory activity. Plays a role in glucocorticoid-mediated down-regulation of the early phase of the inflammatory response. Contributes to the adaptive immune response by enhancing signaling cascades that are triggered by T-cell activation, regulates differentiation and proliferation of activated T-cells. Promotes the differentiation of T-cells into Th1 cells and negatively regulates differentiation into Th2 cells (By similarity). Has no effect on unstimulated T-cells. Negatively regulates hormone exocytosis via activation of the formyl peptide receptors and reorganization of the actin cytoskeleton (By similarity). Has high affinity for Ca(2+) and can bind up to eight Ca(2+) ions (By similarity). Displays Ca(2+)-dependent binding to phospholipid membranes (By similarity). Plays a role in the formation of phagocytic cups and phagosomes. Plays a role in phagocytosis by mediating the Ca(2+)-dependent interaction between phagosomes and the actin cytoskeleton (By similarity).</text>
</comment>
<comment type="function">
    <molecule>Annexin Ac2-26</molecule>
    <text evidence="2">Functions at least in part by activating the formyl peptide receptors and downstream signaling cascades. Promotes chemotaxis of granulocytes and monocytes via activation of the formyl peptide receptors. Promotes rearrangement of the actin cytoskeleton, cell polarization and cell migration. Promotes resolution of inflammation and wound healing. Acts via neutrophil N-formyl peptide receptors to enhance the release of CXCL2.</text>
</comment>
<comment type="subunit">
    <text evidence="2 4 5">Homodimer; non-covalently linked (By similarity). Homodimer; linked by transglutamylation. Homodimers linked by transglutamylation are observed in placenta, but not in other tissues. Interacts with S100A11. Heterotetramer, formed by two molecules each of S100A11 and ANXA1 (By similarity). Interacts with DYSF (By similarity). Interacts with EGFR (By similarity).</text>
</comment>
<comment type="subcellular location">
    <subcellularLocation>
        <location evidence="3">Nucleus</location>
    </subcellularLocation>
    <subcellularLocation>
        <location evidence="4">Cytoplasm</location>
    </subcellularLocation>
    <subcellularLocation>
        <location evidence="4">Cell projection</location>
        <location evidence="4">Cilium</location>
    </subcellularLocation>
    <subcellularLocation>
        <location evidence="6">Basolateral cell membrane</location>
    </subcellularLocation>
    <subcellularLocation>
        <location evidence="4">Lateral cell membrane</location>
    </subcellularLocation>
    <subcellularLocation>
        <location evidence="4">Cell membrane</location>
        <topology evidence="4">Peripheral membrane protein</topology>
    </subcellularLocation>
    <subcellularLocation>
        <location evidence="4">Apical cell membrane</location>
    </subcellularLocation>
    <subcellularLocation>
        <location evidence="4">Membrane</location>
        <topology evidence="4">Peripheral membrane protein</topology>
    </subcellularLocation>
    <subcellularLocation>
        <location evidence="5">Early endosome</location>
    </subcellularLocation>
    <subcellularLocation>
        <location evidence="5">Cytoplasmic vesicle membrane</location>
        <topology evidence="5">Peripheral membrane protein</topology>
    </subcellularLocation>
    <subcellularLocation>
        <location evidence="3">Endosome membrane</location>
        <topology evidence="3">Peripheral membrane protein</topology>
    </subcellularLocation>
    <subcellularLocation>
        <location evidence="4">Secreted</location>
    </subcellularLocation>
    <subcellularLocation>
        <location evidence="2">Secreted</location>
        <location evidence="2">Extracellular space</location>
    </subcellularLocation>
    <subcellularLocation>
        <location evidence="2">Cell membrane</location>
        <topology evidence="2">Peripheral membrane protein</topology>
        <orientation evidence="2">Extracellular side</orientation>
    </subcellularLocation>
    <subcellularLocation>
        <location evidence="4">Secreted</location>
        <location evidence="4">Extracellular exosome</location>
    </subcellularLocation>
    <subcellularLocation>
        <location evidence="4">Cytoplasmic vesicle</location>
        <location evidence="4">Secretory vesicle lumen</location>
    </subcellularLocation>
    <subcellularLocation>
        <location evidence="4">Cell projection</location>
        <location evidence="4">Phagocytic cup</location>
    </subcellularLocation>
    <text evidence="2 4">Colocalizes with actin fibers at phagocytic cups. Secreted, at least in part via exosomes and other secretory vesicles. Detected in exosomes and other extracellular vesicles. Secretion is increased in response to wounding and inflammation (By similarity). Alternatively, the secretion is dependent on protein unfolding and facilitated by the cargo receptor TMED10; it results in the protein translocation from the cytoplasm into ERGIC (endoplasmic reticulum-Golgi intermediate compartment) followed by vesicle entry and secretion (By similarity). Detected in gelatinase granules in resting neutrophils. Neutrophil adhesion to endothelial cells stimulates secretion via gelatinase granules, but foreign particle phagocytosis has no effect. Displays calcium-dependent binding to phospholipid membranes (By similarity).</text>
</comment>
<comment type="domain">
    <text evidence="5">The full-length protein can bind eight Ca(2+) ions via the annexin repeats. Calcium binding causes a major conformation change that modifies dimer contacts and leads to surface exposure of the N-terminal phosphorylation sites; in the absence of Ca(2+), these sites are buried in the interior of the protein core. The N-terminal region becomes disordered in response to calcium-binding.</text>
</comment>
<comment type="PTM">
    <text evidence="2">Phosphorylated by protein kinase C, EGFR and TRPM7. Phosphorylated in response to EGF treatment.</text>
</comment>
<comment type="PTM">
    <text evidence="4">Sumoylated.</text>
</comment>
<comment type="PTM">
    <text evidence="2">Proteolytically cleaved by cathepsin CTSG to release the active N-terminal peptide Ac2-26.</text>
</comment>
<comment type="miscellaneous">
    <text evidence="4">Was originally identified as calcium and phospholipid binding protein that displays Ca(2+)-dependent binding to phospholipid membranes and can promote membrane aggregation in vitro. Was initially identified as inhibitor of phospholipase A2 activity (in vitro). Inhibition of phospholipase activity is mediated via its phospholipid binding activity that limits the access of phospholipase to its substrates.</text>
</comment>
<comment type="similarity">
    <text evidence="7 8">Belongs to the annexin family.</text>
</comment>
<sequence length="346" mass="38737">MSMVSAFLKQAWFIENEEQEYIKAVKGSKGGPGSAVSPYPSFNPSSDVDALHKAITVKGVDEATIIEILTKRNNAQRQQIKAAYLQEKGKPLDEALKKALTGHLEDVALALLKTPARFDADELRAAMKGLGTDEDTLIEILTSRTNKEIREINRVYREELKRDLAKDITSDTSGDFQKALLSLAKGDRSEDFGVNDDLADSDARALYEAGERRKGTDVNVFNTILTTRSYPHLRRVFQMYTKYSKHDMNKVLDLEMKGDVENCFTAIVKCATSKPMFFAEKLHNAMKGAGTRDKILIRIMVSRSEVDMNDIKACYQKLYGISLCQAILDETKGDYEKILVALCGRD</sequence>
<keyword id="KW-0007">Acetylation</keyword>
<keyword id="KW-1064">Adaptive immunity</keyword>
<keyword id="KW-0041">Annexin</keyword>
<keyword id="KW-0106">Calcium</keyword>
<keyword id="KW-0111">Calcium/phospholipid-binding</keyword>
<keyword id="KW-1003">Cell membrane</keyword>
<keyword id="KW-0966">Cell projection</keyword>
<keyword id="KW-0969">Cilium</keyword>
<keyword id="KW-0963">Cytoplasm</keyword>
<keyword id="KW-0968">Cytoplasmic vesicle</keyword>
<keyword id="KW-1015">Disulfide bond</keyword>
<keyword id="KW-0967">Endosome</keyword>
<keyword id="KW-0391">Immunity</keyword>
<keyword id="KW-0395">Inflammatory response</keyword>
<keyword id="KW-0399">Innate immunity</keyword>
<keyword id="KW-1017">Isopeptide bond</keyword>
<keyword id="KW-0472">Membrane</keyword>
<keyword id="KW-0479">Metal-binding</keyword>
<keyword id="KW-0539">Nucleus</keyword>
<keyword id="KW-0593">Phospholipase A2 inhibitor</keyword>
<keyword id="KW-0597">Phosphoprotein</keyword>
<keyword id="KW-1185">Reference proteome</keyword>
<keyword id="KW-0677">Repeat</keyword>
<keyword id="KW-0964">Secreted</keyword>
<keyword id="KW-0832">Ubl conjugation</keyword>
<name>ANXA1_HORSE</name>
<reference key="1">
    <citation type="submission" date="2002-09" db="EMBL/GenBank/DDBJ databases">
        <title>Cloning of equine lipocortin-1 and its full cDNA sequence.</title>
        <authorList>
            <person name="Bryant C.E."/>
            <person name="Allen A."/>
            <person name="Maskell D.J."/>
        </authorList>
    </citation>
    <scope>NUCLEOTIDE SEQUENCE [MRNA]</scope>
</reference>